<proteinExistence type="inferred from homology"/>
<accession>B2T5K6</accession>
<sequence>MSQQLQQIIDTAWENRAELSPKAAPADVREAVAHAIEQLDKGLLRVAEKKDGDWVVNQWLKKAVLLSFRLEDNAPMPAGGYSQFYDKVPSKFANYTAEDFAAGGFRVVPPAIARRGSFIAKNVVLMPSYTNIGAYVDEGSMVDTWATVGSCAQIGKNVHLSGGVGIGGVLEPLQANPVIIEDNCFIGARSEVVEGVIVEENSVISMGVYLGQSTKIYDRETGEVTYGRIPAGSVVVAGNLPSKDGTHSLYCAVIVKKVDAKTRAKVGLNELLRGD</sequence>
<keyword id="KW-0012">Acyltransferase</keyword>
<keyword id="KW-0028">Amino-acid biosynthesis</keyword>
<keyword id="KW-0963">Cytoplasm</keyword>
<keyword id="KW-0220">Diaminopimelate biosynthesis</keyword>
<keyword id="KW-0457">Lysine biosynthesis</keyword>
<keyword id="KW-0677">Repeat</keyword>
<keyword id="KW-0808">Transferase</keyword>
<protein>
    <recommendedName>
        <fullName evidence="1">2,3,4,5-tetrahydropyridine-2,6-dicarboxylate N-succinyltransferase</fullName>
        <ecNumber evidence="1">2.3.1.117</ecNumber>
    </recommendedName>
    <alternativeName>
        <fullName evidence="1">Tetrahydrodipicolinate N-succinyltransferase</fullName>
        <shortName evidence="1">THP succinyltransferase</shortName>
        <shortName evidence="1">Tetrahydropicolinate succinylase</shortName>
    </alternativeName>
</protein>
<organism>
    <name type="scientific">Paraburkholderia phytofirmans (strain DSM 17436 / LMG 22146 / PsJN)</name>
    <name type="common">Burkholderia phytofirmans</name>
    <dbReference type="NCBI Taxonomy" id="398527"/>
    <lineage>
        <taxon>Bacteria</taxon>
        <taxon>Pseudomonadati</taxon>
        <taxon>Pseudomonadota</taxon>
        <taxon>Betaproteobacteria</taxon>
        <taxon>Burkholderiales</taxon>
        <taxon>Burkholderiaceae</taxon>
        <taxon>Paraburkholderia</taxon>
    </lineage>
</organism>
<dbReference type="EC" id="2.3.1.117" evidence="1"/>
<dbReference type="EMBL" id="CP001052">
    <property type="protein sequence ID" value="ACD16863.1"/>
    <property type="molecule type" value="Genomic_DNA"/>
</dbReference>
<dbReference type="RefSeq" id="WP_012433460.1">
    <property type="nucleotide sequence ID" value="NC_010681.1"/>
</dbReference>
<dbReference type="SMR" id="B2T5K6"/>
<dbReference type="STRING" id="398527.Bphyt_2467"/>
<dbReference type="KEGG" id="bpy:Bphyt_2467"/>
<dbReference type="eggNOG" id="COG2171">
    <property type="taxonomic scope" value="Bacteria"/>
</dbReference>
<dbReference type="HOGENOM" id="CLU_050859_0_1_4"/>
<dbReference type="OrthoDB" id="9775362at2"/>
<dbReference type="UniPathway" id="UPA00034">
    <property type="reaction ID" value="UER00019"/>
</dbReference>
<dbReference type="Proteomes" id="UP000001739">
    <property type="component" value="Chromosome 1"/>
</dbReference>
<dbReference type="GO" id="GO:0005737">
    <property type="term" value="C:cytoplasm"/>
    <property type="evidence" value="ECO:0007669"/>
    <property type="project" value="UniProtKB-SubCell"/>
</dbReference>
<dbReference type="GO" id="GO:0008666">
    <property type="term" value="F:2,3,4,5-tetrahydropyridine-2,6-dicarboxylate N-succinyltransferase activity"/>
    <property type="evidence" value="ECO:0007669"/>
    <property type="project" value="UniProtKB-UniRule"/>
</dbReference>
<dbReference type="GO" id="GO:0016779">
    <property type="term" value="F:nucleotidyltransferase activity"/>
    <property type="evidence" value="ECO:0007669"/>
    <property type="project" value="TreeGrafter"/>
</dbReference>
<dbReference type="GO" id="GO:0019877">
    <property type="term" value="P:diaminopimelate biosynthetic process"/>
    <property type="evidence" value="ECO:0007669"/>
    <property type="project" value="UniProtKB-UniRule"/>
</dbReference>
<dbReference type="GO" id="GO:0009089">
    <property type="term" value="P:lysine biosynthetic process via diaminopimelate"/>
    <property type="evidence" value="ECO:0007669"/>
    <property type="project" value="UniProtKB-UniRule"/>
</dbReference>
<dbReference type="CDD" id="cd03350">
    <property type="entry name" value="LbH_THP_succinylT"/>
    <property type="match status" value="1"/>
</dbReference>
<dbReference type="Gene3D" id="2.160.10.10">
    <property type="entry name" value="Hexapeptide repeat proteins"/>
    <property type="match status" value="1"/>
</dbReference>
<dbReference type="Gene3D" id="1.10.166.10">
    <property type="entry name" value="Tetrahydrodipicolinate-N-succinyltransferase, N-terminal domain"/>
    <property type="match status" value="1"/>
</dbReference>
<dbReference type="HAMAP" id="MF_00811">
    <property type="entry name" value="DapD"/>
    <property type="match status" value="1"/>
</dbReference>
<dbReference type="InterPro" id="IPR005664">
    <property type="entry name" value="DapD_Trfase_Hexpep_rpt_fam"/>
</dbReference>
<dbReference type="InterPro" id="IPR001451">
    <property type="entry name" value="Hexapep"/>
</dbReference>
<dbReference type="InterPro" id="IPR018357">
    <property type="entry name" value="Hexapep_transf_CS"/>
</dbReference>
<dbReference type="InterPro" id="IPR023180">
    <property type="entry name" value="THP_succinylTrfase_dom1"/>
</dbReference>
<dbReference type="InterPro" id="IPR037133">
    <property type="entry name" value="THP_succinylTrfase_N_sf"/>
</dbReference>
<dbReference type="InterPro" id="IPR011004">
    <property type="entry name" value="Trimer_LpxA-like_sf"/>
</dbReference>
<dbReference type="NCBIfam" id="TIGR00965">
    <property type="entry name" value="dapD"/>
    <property type="match status" value="1"/>
</dbReference>
<dbReference type="NCBIfam" id="NF008808">
    <property type="entry name" value="PRK11830.1"/>
    <property type="match status" value="1"/>
</dbReference>
<dbReference type="PANTHER" id="PTHR19136:SF52">
    <property type="entry name" value="2,3,4,5-TETRAHYDROPYRIDINE-2,6-DICARBOXYLATE N-SUCCINYLTRANSFERASE"/>
    <property type="match status" value="1"/>
</dbReference>
<dbReference type="PANTHER" id="PTHR19136">
    <property type="entry name" value="MOLYBDENUM COFACTOR GUANYLYLTRANSFERASE"/>
    <property type="match status" value="1"/>
</dbReference>
<dbReference type="Pfam" id="PF14602">
    <property type="entry name" value="Hexapep_2"/>
    <property type="match status" value="1"/>
</dbReference>
<dbReference type="Pfam" id="PF14805">
    <property type="entry name" value="THDPS_N_2"/>
    <property type="match status" value="1"/>
</dbReference>
<dbReference type="SUPFAM" id="SSF51161">
    <property type="entry name" value="Trimeric LpxA-like enzymes"/>
    <property type="match status" value="1"/>
</dbReference>
<dbReference type="PROSITE" id="PS00101">
    <property type="entry name" value="HEXAPEP_TRANSFERASES"/>
    <property type="match status" value="1"/>
</dbReference>
<reference key="1">
    <citation type="journal article" date="2011" name="J. Bacteriol.">
        <title>Complete genome sequence of the plant growth-promoting endophyte Burkholderia phytofirmans strain PsJN.</title>
        <authorList>
            <person name="Weilharter A."/>
            <person name="Mitter B."/>
            <person name="Shin M.V."/>
            <person name="Chain P.S."/>
            <person name="Nowak J."/>
            <person name="Sessitsch A."/>
        </authorList>
    </citation>
    <scope>NUCLEOTIDE SEQUENCE [LARGE SCALE GENOMIC DNA]</scope>
    <source>
        <strain>DSM 17436 / LMG 22146 / PsJN</strain>
    </source>
</reference>
<feature type="chain" id="PRO_1000134036" description="2,3,4,5-tetrahydropyridine-2,6-dicarboxylate N-succinyltransferase">
    <location>
        <begin position="1"/>
        <end position="275"/>
    </location>
</feature>
<evidence type="ECO:0000255" key="1">
    <source>
        <dbReference type="HAMAP-Rule" id="MF_00811"/>
    </source>
</evidence>
<name>DAPD_PARPJ</name>
<gene>
    <name evidence="1" type="primary">dapD</name>
    <name type="ordered locus">Bphyt_2467</name>
</gene>
<comment type="catalytic activity">
    <reaction evidence="1">
        <text>(S)-2,3,4,5-tetrahydrodipicolinate + succinyl-CoA + H2O = (S)-2-succinylamino-6-oxoheptanedioate + CoA</text>
        <dbReference type="Rhea" id="RHEA:17325"/>
        <dbReference type="ChEBI" id="CHEBI:15377"/>
        <dbReference type="ChEBI" id="CHEBI:15685"/>
        <dbReference type="ChEBI" id="CHEBI:16845"/>
        <dbReference type="ChEBI" id="CHEBI:57287"/>
        <dbReference type="ChEBI" id="CHEBI:57292"/>
        <dbReference type="EC" id="2.3.1.117"/>
    </reaction>
</comment>
<comment type="pathway">
    <text evidence="1">Amino-acid biosynthesis; L-lysine biosynthesis via DAP pathway; LL-2,6-diaminopimelate from (S)-tetrahydrodipicolinate (succinylase route): step 1/3.</text>
</comment>
<comment type="subcellular location">
    <subcellularLocation>
        <location evidence="1">Cytoplasm</location>
    </subcellularLocation>
</comment>
<comment type="similarity">
    <text evidence="1">Belongs to the transferase hexapeptide repeat family.</text>
</comment>